<dbReference type="EC" id="1.6.5.2" evidence="1"/>
<dbReference type="EMBL" id="FM200053">
    <property type="protein sequence ID" value="CAR61354.1"/>
    <property type="molecule type" value="Genomic_DNA"/>
</dbReference>
<dbReference type="RefSeq" id="WP_000081820.1">
    <property type="nucleotide sequence ID" value="NC_011147.1"/>
</dbReference>
<dbReference type="SMR" id="B5BH04"/>
<dbReference type="KEGG" id="sek:SSPA3103"/>
<dbReference type="HOGENOM" id="CLU_058643_0_1_6"/>
<dbReference type="Proteomes" id="UP000001869">
    <property type="component" value="Chromosome"/>
</dbReference>
<dbReference type="GO" id="GO:0005886">
    <property type="term" value="C:plasma membrane"/>
    <property type="evidence" value="ECO:0007669"/>
    <property type="project" value="UniProtKB-SubCell"/>
</dbReference>
<dbReference type="GO" id="GO:0009055">
    <property type="term" value="F:electron transfer activity"/>
    <property type="evidence" value="ECO:0007669"/>
    <property type="project" value="TreeGrafter"/>
</dbReference>
<dbReference type="GO" id="GO:0010181">
    <property type="term" value="F:FMN binding"/>
    <property type="evidence" value="ECO:0007669"/>
    <property type="project" value="TreeGrafter"/>
</dbReference>
<dbReference type="GO" id="GO:0050136">
    <property type="term" value="F:NADH:ubiquinone reductase (non-electrogenic) activity"/>
    <property type="evidence" value="ECO:0007669"/>
    <property type="project" value="RHEA"/>
</dbReference>
<dbReference type="GO" id="GO:0008753">
    <property type="term" value="F:NADPH dehydrogenase (quinone) activity"/>
    <property type="evidence" value="ECO:0007669"/>
    <property type="project" value="RHEA"/>
</dbReference>
<dbReference type="GO" id="GO:1901381">
    <property type="term" value="P:positive regulation of potassium ion transmembrane transport"/>
    <property type="evidence" value="ECO:0007669"/>
    <property type="project" value="UniProtKB-UniRule"/>
</dbReference>
<dbReference type="GO" id="GO:0006813">
    <property type="term" value="P:potassium ion transport"/>
    <property type="evidence" value="ECO:0007669"/>
    <property type="project" value="InterPro"/>
</dbReference>
<dbReference type="FunFam" id="3.40.50.360:FF:000013">
    <property type="entry name" value="Glutathione-regulated potassium-efflux system ancillary protein KefG"/>
    <property type="match status" value="1"/>
</dbReference>
<dbReference type="Gene3D" id="3.40.50.360">
    <property type="match status" value="1"/>
</dbReference>
<dbReference type="HAMAP" id="MF_01415">
    <property type="entry name" value="K_H_efflux_KefG"/>
    <property type="match status" value="1"/>
</dbReference>
<dbReference type="InterPro" id="IPR003680">
    <property type="entry name" value="Flavodoxin_fold"/>
</dbReference>
<dbReference type="InterPro" id="IPR029039">
    <property type="entry name" value="Flavoprotein-like_sf"/>
</dbReference>
<dbReference type="InterPro" id="IPR023947">
    <property type="entry name" value="K_H_efflux_KefG"/>
</dbReference>
<dbReference type="InterPro" id="IPR046980">
    <property type="entry name" value="KefG/KefF"/>
</dbReference>
<dbReference type="NCBIfam" id="NF003430">
    <property type="entry name" value="PRK04930.1"/>
    <property type="match status" value="1"/>
</dbReference>
<dbReference type="PANTHER" id="PTHR47307">
    <property type="entry name" value="GLUTATHIONE-REGULATED POTASSIUM-EFFLUX SYSTEM ANCILLARY PROTEIN KEFG"/>
    <property type="match status" value="1"/>
</dbReference>
<dbReference type="PANTHER" id="PTHR47307:SF1">
    <property type="entry name" value="GLUTATHIONE-REGULATED POTASSIUM-EFFLUX SYSTEM ANCILLARY PROTEIN KEFG"/>
    <property type="match status" value="1"/>
</dbReference>
<dbReference type="Pfam" id="PF02525">
    <property type="entry name" value="Flavodoxin_2"/>
    <property type="match status" value="1"/>
</dbReference>
<dbReference type="SUPFAM" id="SSF52218">
    <property type="entry name" value="Flavoproteins"/>
    <property type="match status" value="1"/>
</dbReference>
<gene>
    <name evidence="1" type="primary">kefG</name>
    <name type="ordered locus">SSPA3103</name>
</gene>
<protein>
    <recommendedName>
        <fullName evidence="1">Glutathione-regulated potassium-efflux system ancillary protein KefG</fullName>
    </recommendedName>
    <alternativeName>
        <fullName evidence="1">Putative quinone oxidoreductase KefG</fullName>
        <ecNumber evidence="1">1.6.5.2</ecNumber>
    </alternativeName>
</protein>
<name>KEFG_SALPK</name>
<evidence type="ECO:0000255" key="1">
    <source>
        <dbReference type="HAMAP-Rule" id="MF_01415"/>
    </source>
</evidence>
<organism>
    <name type="scientific">Salmonella paratyphi A (strain AKU_12601)</name>
    <dbReference type="NCBI Taxonomy" id="554290"/>
    <lineage>
        <taxon>Bacteria</taxon>
        <taxon>Pseudomonadati</taxon>
        <taxon>Pseudomonadota</taxon>
        <taxon>Gammaproteobacteria</taxon>
        <taxon>Enterobacterales</taxon>
        <taxon>Enterobacteriaceae</taxon>
        <taxon>Salmonella</taxon>
    </lineage>
</organism>
<keyword id="KW-0997">Cell inner membrane</keyword>
<keyword id="KW-1003">Cell membrane</keyword>
<keyword id="KW-0472">Membrane</keyword>
<keyword id="KW-0520">NAD</keyword>
<keyword id="KW-0560">Oxidoreductase</keyword>
<reference key="1">
    <citation type="journal article" date="2009" name="BMC Genomics">
        <title>Pseudogene accumulation in the evolutionary histories of Salmonella enterica serovars Paratyphi A and Typhi.</title>
        <authorList>
            <person name="Holt K.E."/>
            <person name="Thomson N.R."/>
            <person name="Wain J."/>
            <person name="Langridge G.C."/>
            <person name="Hasan R."/>
            <person name="Bhutta Z.A."/>
            <person name="Quail M.A."/>
            <person name="Norbertczak H."/>
            <person name="Walker D."/>
            <person name="Simmonds M."/>
            <person name="White B."/>
            <person name="Bason N."/>
            <person name="Mungall K."/>
            <person name="Dougan G."/>
            <person name="Parkhill J."/>
        </authorList>
    </citation>
    <scope>NUCLEOTIDE SEQUENCE [LARGE SCALE GENOMIC DNA]</scope>
    <source>
        <strain>AKU_12601</strain>
    </source>
</reference>
<sequence length="183" mass="20927">MSQPAKVLLLYAHPESQDSVANRVLLKPAIQHNNVTVHDLYARYPDFFIDTPYEQALLREHDVIVFQHPLYTYSCPALLKEWLDRVLSRGFASGPGGNQLVGKYWRSVITTGEPESAYRYDALNRYPMSDVLRPFELTAAMCRMHWMPPIIVYWARRQSPQTLASHAKAYGEWLANPVSAGGY</sequence>
<proteinExistence type="inferred from homology"/>
<comment type="function">
    <text evidence="1">Regulatory subunit of a potassium efflux system that confers protection against electrophiles. Required for full activity of KefB.</text>
</comment>
<comment type="catalytic activity">
    <reaction evidence="1">
        <text>a quinone + NADH + H(+) = a quinol + NAD(+)</text>
        <dbReference type="Rhea" id="RHEA:46160"/>
        <dbReference type="ChEBI" id="CHEBI:15378"/>
        <dbReference type="ChEBI" id="CHEBI:24646"/>
        <dbReference type="ChEBI" id="CHEBI:57540"/>
        <dbReference type="ChEBI" id="CHEBI:57945"/>
        <dbReference type="ChEBI" id="CHEBI:132124"/>
        <dbReference type="EC" id="1.6.5.2"/>
    </reaction>
</comment>
<comment type="catalytic activity">
    <reaction evidence="1">
        <text>a quinone + NADPH + H(+) = a quinol + NADP(+)</text>
        <dbReference type="Rhea" id="RHEA:46164"/>
        <dbReference type="ChEBI" id="CHEBI:15378"/>
        <dbReference type="ChEBI" id="CHEBI:24646"/>
        <dbReference type="ChEBI" id="CHEBI:57783"/>
        <dbReference type="ChEBI" id="CHEBI:58349"/>
        <dbReference type="ChEBI" id="CHEBI:132124"/>
        <dbReference type="EC" id="1.6.5.2"/>
    </reaction>
</comment>
<comment type="subunit">
    <text evidence="1">Interacts with KefB.</text>
</comment>
<comment type="subcellular location">
    <subcellularLocation>
        <location evidence="1">Cell inner membrane</location>
        <topology evidence="1">Peripheral membrane protein</topology>
        <orientation evidence="1">Cytoplasmic side</orientation>
    </subcellularLocation>
</comment>
<comment type="similarity">
    <text evidence="1">Belongs to the NAD(P)H dehydrogenase (quinone) family. KefG subfamily.</text>
</comment>
<feature type="chain" id="PRO_1000145587" description="Glutathione-regulated potassium-efflux system ancillary protein KefG">
    <location>
        <begin position="1"/>
        <end position="183"/>
    </location>
</feature>
<accession>B5BH04</accession>